<keyword id="KW-0963">Cytoplasm</keyword>
<keyword id="KW-0460">Magnesium</keyword>
<keyword id="KW-0479">Metal-binding</keyword>
<keyword id="KW-0566">Pantothenate biosynthesis</keyword>
<keyword id="KW-1185">Reference proteome</keyword>
<keyword id="KW-0808">Transferase</keyword>
<organism>
    <name type="scientific">Aquifex aeolicus (strain VF5)</name>
    <dbReference type="NCBI Taxonomy" id="224324"/>
    <lineage>
        <taxon>Bacteria</taxon>
        <taxon>Pseudomonadati</taxon>
        <taxon>Aquificota</taxon>
        <taxon>Aquificia</taxon>
        <taxon>Aquificales</taxon>
        <taxon>Aquificaceae</taxon>
        <taxon>Aquifex</taxon>
    </lineage>
</organism>
<gene>
    <name evidence="1" type="primary">panB</name>
    <name type="ordered locus">aq_1973</name>
</gene>
<dbReference type="EC" id="2.1.2.11" evidence="1"/>
<dbReference type="EMBL" id="AE000657">
    <property type="protein sequence ID" value="AAC07749.1"/>
    <property type="molecule type" value="Genomic_DNA"/>
</dbReference>
<dbReference type="PIR" id="C70469">
    <property type="entry name" value="C70469"/>
</dbReference>
<dbReference type="RefSeq" id="NP_214352.1">
    <property type="nucleotide sequence ID" value="NC_000918.1"/>
</dbReference>
<dbReference type="RefSeq" id="WP_010881288.1">
    <property type="nucleotide sequence ID" value="NC_000918.1"/>
</dbReference>
<dbReference type="SMR" id="O67783"/>
<dbReference type="FunCoup" id="O67783">
    <property type="interactions" value="388"/>
</dbReference>
<dbReference type="STRING" id="224324.aq_1973"/>
<dbReference type="EnsemblBacteria" id="AAC07749">
    <property type="protein sequence ID" value="AAC07749"/>
    <property type="gene ID" value="aq_1973"/>
</dbReference>
<dbReference type="KEGG" id="aae:aq_1973"/>
<dbReference type="PATRIC" id="fig|224324.8.peg.1523"/>
<dbReference type="eggNOG" id="COG0413">
    <property type="taxonomic scope" value="Bacteria"/>
</dbReference>
<dbReference type="HOGENOM" id="CLU_036645_1_0_0"/>
<dbReference type="InParanoid" id="O67783"/>
<dbReference type="OrthoDB" id="9781789at2"/>
<dbReference type="UniPathway" id="UPA00028">
    <property type="reaction ID" value="UER00003"/>
</dbReference>
<dbReference type="Proteomes" id="UP000000798">
    <property type="component" value="Chromosome"/>
</dbReference>
<dbReference type="GO" id="GO:0005737">
    <property type="term" value="C:cytoplasm"/>
    <property type="evidence" value="ECO:0000318"/>
    <property type="project" value="GO_Central"/>
</dbReference>
<dbReference type="GO" id="GO:0003864">
    <property type="term" value="F:3-methyl-2-oxobutanoate hydroxymethyltransferase activity"/>
    <property type="evidence" value="ECO:0000318"/>
    <property type="project" value="GO_Central"/>
</dbReference>
<dbReference type="GO" id="GO:0000287">
    <property type="term" value="F:magnesium ion binding"/>
    <property type="evidence" value="ECO:0000318"/>
    <property type="project" value="GO_Central"/>
</dbReference>
<dbReference type="GO" id="GO:0015940">
    <property type="term" value="P:pantothenate biosynthetic process"/>
    <property type="evidence" value="ECO:0000318"/>
    <property type="project" value="GO_Central"/>
</dbReference>
<dbReference type="CDD" id="cd06557">
    <property type="entry name" value="KPHMT-like"/>
    <property type="match status" value="1"/>
</dbReference>
<dbReference type="FunFam" id="3.20.20.60:FF:000003">
    <property type="entry name" value="3-methyl-2-oxobutanoate hydroxymethyltransferase"/>
    <property type="match status" value="1"/>
</dbReference>
<dbReference type="Gene3D" id="3.20.20.60">
    <property type="entry name" value="Phosphoenolpyruvate-binding domains"/>
    <property type="match status" value="1"/>
</dbReference>
<dbReference type="HAMAP" id="MF_00156">
    <property type="entry name" value="PanB"/>
    <property type="match status" value="1"/>
</dbReference>
<dbReference type="InterPro" id="IPR003700">
    <property type="entry name" value="Pantoate_hydroxy_MeTrfase"/>
</dbReference>
<dbReference type="InterPro" id="IPR015813">
    <property type="entry name" value="Pyrv/PenolPyrv_kinase-like_dom"/>
</dbReference>
<dbReference type="InterPro" id="IPR040442">
    <property type="entry name" value="Pyrv_kinase-like_dom_sf"/>
</dbReference>
<dbReference type="NCBIfam" id="TIGR00222">
    <property type="entry name" value="panB"/>
    <property type="match status" value="1"/>
</dbReference>
<dbReference type="NCBIfam" id="NF001452">
    <property type="entry name" value="PRK00311.1"/>
    <property type="match status" value="1"/>
</dbReference>
<dbReference type="PANTHER" id="PTHR20881">
    <property type="entry name" value="3-METHYL-2-OXOBUTANOATE HYDROXYMETHYLTRANSFERASE"/>
    <property type="match status" value="1"/>
</dbReference>
<dbReference type="PANTHER" id="PTHR20881:SF0">
    <property type="entry name" value="3-METHYL-2-OXOBUTANOATE HYDROXYMETHYLTRANSFERASE"/>
    <property type="match status" value="1"/>
</dbReference>
<dbReference type="Pfam" id="PF02548">
    <property type="entry name" value="Pantoate_transf"/>
    <property type="match status" value="1"/>
</dbReference>
<dbReference type="PIRSF" id="PIRSF000388">
    <property type="entry name" value="Pantoate_hydroxy_MeTrfase"/>
    <property type="match status" value="1"/>
</dbReference>
<dbReference type="SUPFAM" id="SSF51621">
    <property type="entry name" value="Phosphoenolpyruvate/pyruvate domain"/>
    <property type="match status" value="1"/>
</dbReference>
<sequence length="265" mass="29513">MAINLQTLFKKKREGKKITMVSTYDYWSAKLCDEVGIDCILVGDSLGTVVKGEGDTLSVTLEEIIYHTKCVMRGVKNAFVIADMPFMSYQVSMEKAVENCGRVIKETKAKAVKLEGGEEIAELVYKLTRIGIPVVGHVGFTPQHINVFGKPKVVGKKKEEEEKLRRDFRALEEAGAFMIVLESVPTHLAKELWKGSNSIVIGIGAGKYVDGQVLVFHDIVGLFEDFKPKFVRRYLEGAKLVKEALKNFKIDVEGGNFPSEEESYG</sequence>
<proteinExistence type="inferred from homology"/>
<reference key="1">
    <citation type="journal article" date="1998" name="Nature">
        <title>The complete genome of the hyperthermophilic bacterium Aquifex aeolicus.</title>
        <authorList>
            <person name="Deckert G."/>
            <person name="Warren P.V."/>
            <person name="Gaasterland T."/>
            <person name="Young W.G."/>
            <person name="Lenox A.L."/>
            <person name="Graham D.E."/>
            <person name="Overbeek R."/>
            <person name="Snead M.A."/>
            <person name="Keller M."/>
            <person name="Aujay M."/>
            <person name="Huber R."/>
            <person name="Feldman R.A."/>
            <person name="Short J.M."/>
            <person name="Olsen G.J."/>
            <person name="Swanson R.V."/>
        </authorList>
    </citation>
    <scope>NUCLEOTIDE SEQUENCE [LARGE SCALE GENOMIC DNA]</scope>
    <source>
        <strain>VF5</strain>
    </source>
</reference>
<comment type="function">
    <text evidence="1">Catalyzes the reversible reaction in which hydroxymethyl group from 5,10-methylenetetrahydrofolate is transferred onto alpha-ketoisovalerate to form ketopantoate.</text>
</comment>
<comment type="catalytic activity">
    <reaction evidence="1">
        <text>3-methyl-2-oxobutanoate + (6R)-5,10-methylene-5,6,7,8-tetrahydrofolate + H2O = 2-dehydropantoate + (6S)-5,6,7,8-tetrahydrofolate</text>
        <dbReference type="Rhea" id="RHEA:11824"/>
        <dbReference type="ChEBI" id="CHEBI:11561"/>
        <dbReference type="ChEBI" id="CHEBI:11851"/>
        <dbReference type="ChEBI" id="CHEBI:15377"/>
        <dbReference type="ChEBI" id="CHEBI:15636"/>
        <dbReference type="ChEBI" id="CHEBI:57453"/>
        <dbReference type="EC" id="2.1.2.11"/>
    </reaction>
</comment>
<comment type="cofactor">
    <cofactor evidence="1">
        <name>Mg(2+)</name>
        <dbReference type="ChEBI" id="CHEBI:18420"/>
    </cofactor>
    <text evidence="1">Binds 1 Mg(2+) ion per subunit.</text>
</comment>
<comment type="pathway">
    <text evidence="1">Cofactor biosynthesis; (R)-pantothenate biosynthesis; (R)-pantoate from 3-methyl-2-oxobutanoate: step 1/2.</text>
</comment>
<comment type="subunit">
    <text evidence="1">Homodecamer; pentamer of dimers.</text>
</comment>
<comment type="subcellular location">
    <subcellularLocation>
        <location evidence="1">Cytoplasm</location>
    </subcellularLocation>
</comment>
<comment type="similarity">
    <text evidence="1">Belongs to the PanB family.</text>
</comment>
<name>PANB_AQUAE</name>
<accession>O67783</accession>
<protein>
    <recommendedName>
        <fullName evidence="1">3-methyl-2-oxobutanoate hydroxymethyltransferase</fullName>
        <ecNumber evidence="1">2.1.2.11</ecNumber>
    </recommendedName>
    <alternativeName>
        <fullName evidence="1">Ketopantoate hydroxymethyltransferase</fullName>
        <shortName evidence="1">KPHMT</shortName>
    </alternativeName>
</protein>
<evidence type="ECO:0000255" key="1">
    <source>
        <dbReference type="HAMAP-Rule" id="MF_00156"/>
    </source>
</evidence>
<feature type="chain" id="PRO_0000184807" description="3-methyl-2-oxobutanoate hydroxymethyltransferase">
    <location>
        <begin position="1"/>
        <end position="265"/>
    </location>
</feature>
<feature type="active site" description="Proton acceptor" evidence="1">
    <location>
        <position position="182"/>
    </location>
</feature>
<feature type="binding site" evidence="1">
    <location>
        <begin position="44"/>
        <end position="45"/>
    </location>
    <ligand>
        <name>3-methyl-2-oxobutanoate</name>
        <dbReference type="ChEBI" id="CHEBI:11851"/>
    </ligand>
</feature>
<feature type="binding site" evidence="1">
    <location>
        <position position="44"/>
    </location>
    <ligand>
        <name>Mg(2+)</name>
        <dbReference type="ChEBI" id="CHEBI:18420"/>
    </ligand>
</feature>
<feature type="binding site" evidence="1">
    <location>
        <position position="83"/>
    </location>
    <ligand>
        <name>3-methyl-2-oxobutanoate</name>
        <dbReference type="ChEBI" id="CHEBI:11851"/>
    </ligand>
</feature>
<feature type="binding site" evidence="1">
    <location>
        <position position="83"/>
    </location>
    <ligand>
        <name>Mg(2+)</name>
        <dbReference type="ChEBI" id="CHEBI:18420"/>
    </ligand>
</feature>
<feature type="binding site" evidence="1">
    <location>
        <position position="113"/>
    </location>
    <ligand>
        <name>3-methyl-2-oxobutanoate</name>
        <dbReference type="ChEBI" id="CHEBI:11851"/>
    </ligand>
</feature>
<feature type="binding site" evidence="1">
    <location>
        <position position="115"/>
    </location>
    <ligand>
        <name>Mg(2+)</name>
        <dbReference type="ChEBI" id="CHEBI:18420"/>
    </ligand>
</feature>